<evidence type="ECO:0000250" key="1"/>
<evidence type="ECO:0000250" key="2">
    <source>
        <dbReference type="UniProtKB" id="P0A9P4"/>
    </source>
</evidence>
<evidence type="ECO:0000305" key="3"/>
<feature type="chain" id="PRO_0000166738" description="Thioredoxin reductase">
    <location>
        <begin position="1"/>
        <end position="315"/>
    </location>
</feature>
<feature type="binding site" evidence="2">
    <location>
        <begin position="45"/>
        <end position="52"/>
    </location>
    <ligand>
        <name>FAD</name>
        <dbReference type="ChEBI" id="CHEBI:57692"/>
    </ligand>
</feature>
<feature type="binding site" evidence="2">
    <location>
        <begin position="288"/>
        <end position="297"/>
    </location>
    <ligand>
        <name>FAD</name>
        <dbReference type="ChEBI" id="CHEBI:57692"/>
    </ligand>
</feature>
<feature type="disulfide bond" description="Redox-active" evidence="2">
    <location>
        <begin position="145"/>
        <end position="148"/>
    </location>
</feature>
<organism>
    <name type="scientific">Mycoplasma pneumoniae (strain ATCC 29342 / M129 / Subtype 1)</name>
    <name type="common">Mycoplasmoides pneumoniae</name>
    <dbReference type="NCBI Taxonomy" id="272634"/>
    <lineage>
        <taxon>Bacteria</taxon>
        <taxon>Bacillati</taxon>
        <taxon>Mycoplasmatota</taxon>
        <taxon>Mycoplasmoidales</taxon>
        <taxon>Mycoplasmoidaceae</taxon>
        <taxon>Mycoplasmoides</taxon>
    </lineage>
</organism>
<sequence>MLKVKSDFLTKDQVIYDVAIVGAGPAGIAAGIYGKRANLNLAIIEGSTPGGKVVKTNIVENYPGYKSITGPDLGLEMYNHLIDLEPTFFYANLIKLDKAADTFILYLDDKTVVFAKTVIYATGMLERKLGVAKEDHFYGKGISYCAICDGSLYKDQVVGVVGGGNSAIQEALYLASMAKTVHLIHRREGFRADETALNKLRNLPNVVFHLNYTVKELLGNNTLNGIVLQNTLDHSTKQIDLNCVFPYIGFESITKPVEHLNLKLDPQGFLITNEQMETSLKGLFAAGDCRSKHFRQIGTAINDGIIAVLTIRDVL</sequence>
<gene>
    <name type="primary">trxB</name>
    <name type="ordered locus">MPN_240</name>
    <name type="ORF">MP591</name>
</gene>
<comment type="catalytic activity">
    <reaction>
        <text>[thioredoxin]-dithiol + NADP(+) = [thioredoxin]-disulfide + NADPH + H(+)</text>
        <dbReference type="Rhea" id="RHEA:20345"/>
        <dbReference type="Rhea" id="RHEA-COMP:10698"/>
        <dbReference type="Rhea" id="RHEA-COMP:10700"/>
        <dbReference type="ChEBI" id="CHEBI:15378"/>
        <dbReference type="ChEBI" id="CHEBI:29950"/>
        <dbReference type="ChEBI" id="CHEBI:50058"/>
        <dbReference type="ChEBI" id="CHEBI:57783"/>
        <dbReference type="ChEBI" id="CHEBI:58349"/>
        <dbReference type="EC" id="1.8.1.9"/>
    </reaction>
</comment>
<comment type="cofactor">
    <cofactor evidence="2">
        <name>FAD</name>
        <dbReference type="ChEBI" id="CHEBI:57692"/>
    </cofactor>
    <text evidence="2">Binds 1 FAD per subunit.</text>
</comment>
<comment type="subunit">
    <text evidence="2">Homodimer.</text>
</comment>
<comment type="subcellular location">
    <subcellularLocation>
        <location evidence="1">Cytoplasm</location>
    </subcellularLocation>
</comment>
<comment type="miscellaneous">
    <text>The active site is a redox-active disulfide bond.</text>
</comment>
<comment type="similarity">
    <text evidence="3">Belongs to the class-II pyridine nucleotide-disulfide oxidoreductase family.</text>
</comment>
<name>TRXB_MYCPN</name>
<accession>P75531</accession>
<dbReference type="EC" id="1.8.1.9"/>
<dbReference type="EMBL" id="U51988">
    <property type="protein sequence ID" value="AAC45451.1"/>
    <property type="molecule type" value="Genomic_DNA"/>
</dbReference>
<dbReference type="EMBL" id="U00089">
    <property type="protein sequence ID" value="AAB96239.1"/>
    <property type="molecule type" value="Genomic_DNA"/>
</dbReference>
<dbReference type="PIR" id="S73917">
    <property type="entry name" value="S73917"/>
</dbReference>
<dbReference type="RefSeq" id="NP_109928.1">
    <property type="nucleotide sequence ID" value="NC_000912.1"/>
</dbReference>
<dbReference type="RefSeq" id="WP_010874597.1">
    <property type="nucleotide sequence ID" value="NZ_OU342337.1"/>
</dbReference>
<dbReference type="SMR" id="P75531"/>
<dbReference type="STRING" id="272634.MPN_240"/>
<dbReference type="EnsemblBacteria" id="AAB96239">
    <property type="protein sequence ID" value="AAB96239"/>
    <property type="gene ID" value="MPN_240"/>
</dbReference>
<dbReference type="KEGG" id="mpn:MPN_240"/>
<dbReference type="PATRIC" id="fig|272634.6.peg.259"/>
<dbReference type="HOGENOM" id="CLU_031864_5_3_14"/>
<dbReference type="OrthoDB" id="9806179at2"/>
<dbReference type="BioCyc" id="MetaCyc:MONOMER-543"/>
<dbReference type="BioCyc" id="MPNE272634:G1GJ3-381-MONOMER"/>
<dbReference type="Proteomes" id="UP000000808">
    <property type="component" value="Chromosome"/>
</dbReference>
<dbReference type="GO" id="GO:0005737">
    <property type="term" value="C:cytoplasm"/>
    <property type="evidence" value="ECO:0007669"/>
    <property type="project" value="UniProtKB-SubCell"/>
</dbReference>
<dbReference type="GO" id="GO:0004791">
    <property type="term" value="F:thioredoxin-disulfide reductase (NADPH) activity"/>
    <property type="evidence" value="ECO:0007669"/>
    <property type="project" value="UniProtKB-EC"/>
</dbReference>
<dbReference type="GO" id="GO:0019430">
    <property type="term" value="P:removal of superoxide radicals"/>
    <property type="evidence" value="ECO:0007669"/>
    <property type="project" value="InterPro"/>
</dbReference>
<dbReference type="Gene3D" id="3.50.50.60">
    <property type="entry name" value="FAD/NAD(P)-binding domain"/>
    <property type="match status" value="2"/>
</dbReference>
<dbReference type="InterPro" id="IPR036188">
    <property type="entry name" value="FAD/NAD-bd_sf"/>
</dbReference>
<dbReference type="InterPro" id="IPR023753">
    <property type="entry name" value="FAD/NAD-binding_dom"/>
</dbReference>
<dbReference type="InterPro" id="IPR050097">
    <property type="entry name" value="Ferredoxin-NADP_redctase_2"/>
</dbReference>
<dbReference type="InterPro" id="IPR008255">
    <property type="entry name" value="Pyr_nucl-diS_OxRdtase_2_AS"/>
</dbReference>
<dbReference type="InterPro" id="IPR005982">
    <property type="entry name" value="Thioredox_Rdtase"/>
</dbReference>
<dbReference type="NCBIfam" id="TIGR01292">
    <property type="entry name" value="TRX_reduct"/>
    <property type="match status" value="1"/>
</dbReference>
<dbReference type="PANTHER" id="PTHR48105">
    <property type="entry name" value="THIOREDOXIN REDUCTASE 1-RELATED-RELATED"/>
    <property type="match status" value="1"/>
</dbReference>
<dbReference type="Pfam" id="PF07992">
    <property type="entry name" value="Pyr_redox_2"/>
    <property type="match status" value="1"/>
</dbReference>
<dbReference type="PRINTS" id="PR00368">
    <property type="entry name" value="FADPNR"/>
</dbReference>
<dbReference type="PRINTS" id="PR00469">
    <property type="entry name" value="PNDRDTASEII"/>
</dbReference>
<dbReference type="SUPFAM" id="SSF51905">
    <property type="entry name" value="FAD/NAD(P)-binding domain"/>
    <property type="match status" value="1"/>
</dbReference>
<dbReference type="PROSITE" id="PS00573">
    <property type="entry name" value="PYRIDINE_REDOX_2"/>
    <property type="match status" value="1"/>
</dbReference>
<keyword id="KW-0963">Cytoplasm</keyword>
<keyword id="KW-1015">Disulfide bond</keyword>
<keyword id="KW-0274">FAD</keyword>
<keyword id="KW-0285">Flavoprotein</keyword>
<keyword id="KW-0521">NADP</keyword>
<keyword id="KW-0560">Oxidoreductase</keyword>
<keyword id="KW-0676">Redox-active center</keyword>
<keyword id="KW-1185">Reference proteome</keyword>
<reference key="1">
    <citation type="journal article" date="1997" name="Microbiology">
        <title>The thioredoxin reductase system of mycoplasmas.</title>
        <authorList>
            <person name="Ben-Menachem G."/>
            <person name="Himmelreich R."/>
            <person name="Herrmann R."/>
            <person name="Aharonowitz Y."/>
            <person name="Rottem S."/>
        </authorList>
    </citation>
    <scope>NUCLEOTIDE SEQUENCE [GENOMIC DNA]</scope>
    <source>
        <strain>ATCC 29342 / M129 / Subtype 1</strain>
    </source>
</reference>
<reference key="2">
    <citation type="journal article" date="1996" name="Nucleic Acids Res.">
        <title>Complete sequence analysis of the genome of the bacterium Mycoplasma pneumoniae.</title>
        <authorList>
            <person name="Himmelreich R."/>
            <person name="Hilbert H."/>
            <person name="Plagens H."/>
            <person name="Pirkl E."/>
            <person name="Li B.-C."/>
            <person name="Herrmann R."/>
        </authorList>
    </citation>
    <scope>NUCLEOTIDE SEQUENCE [LARGE SCALE GENOMIC DNA]</scope>
    <source>
        <strain>ATCC 29342 / M129 / Subtype 1</strain>
    </source>
</reference>
<proteinExistence type="inferred from homology"/>
<protein>
    <recommendedName>
        <fullName>Thioredoxin reductase</fullName>
        <shortName>TRXR</shortName>
        <ecNumber>1.8.1.9</ecNumber>
    </recommendedName>
</protein>